<organism>
    <name type="scientific">Picea abies</name>
    <name type="common">Norway spruce</name>
    <name type="synonym">Picea excelsa</name>
    <dbReference type="NCBI Taxonomy" id="3329"/>
    <lineage>
        <taxon>Eukaryota</taxon>
        <taxon>Viridiplantae</taxon>
        <taxon>Streptophyta</taxon>
        <taxon>Embryophyta</taxon>
        <taxon>Tracheophyta</taxon>
        <taxon>Spermatophyta</taxon>
        <taxon>Pinopsida</taxon>
        <taxon>Pinidae</taxon>
        <taxon>Conifers I</taxon>
        <taxon>Pinales</taxon>
        <taxon>Pinaceae</taxon>
        <taxon>Picea</taxon>
    </lineage>
</organism>
<accession>Q08632</accession>
<keyword id="KW-0560">Oxidoreductase</keyword>
<proteinExistence type="evidence at transcript level"/>
<comment type="similarity">
    <text evidence="3">Belongs to the short-chain dehydrogenases/reductases (SDR) family.</text>
</comment>
<name>SDR1_PICAB</name>
<protein>
    <recommendedName>
        <fullName>Short-chain type dehydrogenase/reductase</fullName>
        <ecNumber>1.-.-.-</ecNumber>
    </recommendedName>
</protein>
<sequence length="271" mass="28725">MATADEQEEEMRMRLPLPLGGRVAIVTGASRGIGREIALNMAEKGAKVVIHYSSNQHAAEEVASIINNKSPSSGDGVRAIVCKADVAEPSQVAQLFDTAEHAFGPLHIVVNNAGVTDSKYPTLAQTSDEEWDRIFQVNCKGAFLCSREAAKRVVRGGGGRIINISSSLVAMPIPRYGAYTASKAAVEMMTRILAQELRGTQITANCVAPGPVATDMFFAGKSEAAVEAGVKSNPFERLGKVEDVAPLVAFLASDEGEWVNAQVVRVNGGQV</sequence>
<dbReference type="EC" id="1.-.-.-"/>
<dbReference type="EMBL" id="X74115">
    <property type="protein sequence ID" value="CAA52213.1"/>
    <property type="molecule type" value="mRNA"/>
</dbReference>
<dbReference type="PIR" id="S34678">
    <property type="entry name" value="S34678"/>
</dbReference>
<dbReference type="SMR" id="Q08632"/>
<dbReference type="GO" id="GO:0016614">
    <property type="term" value="F:oxidoreductase activity, acting on CH-OH group of donors"/>
    <property type="evidence" value="ECO:0007669"/>
    <property type="project" value="UniProtKB-ARBA"/>
</dbReference>
<dbReference type="CDD" id="cd05362">
    <property type="entry name" value="THN_reductase-like_SDR_c"/>
    <property type="match status" value="1"/>
</dbReference>
<dbReference type="FunFam" id="3.40.50.720:FF:000084">
    <property type="entry name" value="Short-chain dehydrogenase reductase"/>
    <property type="match status" value="1"/>
</dbReference>
<dbReference type="Gene3D" id="3.40.50.720">
    <property type="entry name" value="NAD(P)-binding Rossmann-like Domain"/>
    <property type="match status" value="1"/>
</dbReference>
<dbReference type="InterPro" id="IPR036291">
    <property type="entry name" value="NAD(P)-bd_dom_sf"/>
</dbReference>
<dbReference type="InterPro" id="IPR020904">
    <property type="entry name" value="Sc_DH/Rdtase_CS"/>
</dbReference>
<dbReference type="InterPro" id="IPR002347">
    <property type="entry name" value="SDR_fam"/>
</dbReference>
<dbReference type="PANTHER" id="PTHR48107">
    <property type="entry name" value="NADPH-DEPENDENT ALDEHYDE REDUCTASE-LIKE PROTEIN, CHLOROPLASTIC-RELATED"/>
    <property type="match status" value="1"/>
</dbReference>
<dbReference type="PANTHER" id="PTHR48107:SF7">
    <property type="entry name" value="RE15974P"/>
    <property type="match status" value="1"/>
</dbReference>
<dbReference type="Pfam" id="PF13561">
    <property type="entry name" value="adh_short_C2"/>
    <property type="match status" value="1"/>
</dbReference>
<dbReference type="PRINTS" id="PR00081">
    <property type="entry name" value="GDHRDH"/>
</dbReference>
<dbReference type="PRINTS" id="PR00080">
    <property type="entry name" value="SDRFAMILY"/>
</dbReference>
<dbReference type="SMART" id="SM00822">
    <property type="entry name" value="PKS_KR"/>
    <property type="match status" value="1"/>
</dbReference>
<dbReference type="SUPFAM" id="SSF51735">
    <property type="entry name" value="NAD(P)-binding Rossmann-fold domains"/>
    <property type="match status" value="1"/>
</dbReference>
<dbReference type="PROSITE" id="PS00061">
    <property type="entry name" value="ADH_SHORT"/>
    <property type="match status" value="1"/>
</dbReference>
<reference key="1">
    <citation type="journal article" date="1993" name="Plant Physiol.">
        <title>Isolation and characterization of a cDNA clone encoding a novel short-chain alcohol dehydrogenase from Norway spruce (Picea abies L. Karst).</title>
        <authorList>
            <person name="Bauer S."/>
            <person name="Galliano H."/>
            <person name="Pfeiffer F."/>
            <person name="Messner B."/>
            <person name="Sandermann H. Jr."/>
            <person name="Ernst D."/>
        </authorList>
    </citation>
    <scope>NUCLEOTIDE SEQUENCE [MRNA]</scope>
</reference>
<feature type="chain" id="PRO_0000054774" description="Short-chain type dehydrogenase/reductase">
    <location>
        <begin position="1"/>
        <end position="271"/>
    </location>
</feature>
<feature type="active site" description="Proton acceptor" evidence="2">
    <location>
        <position position="179"/>
    </location>
</feature>
<feature type="binding site" evidence="1">
    <location>
        <begin position="25"/>
        <end position="49"/>
    </location>
    <ligand>
        <name>NAD(+)</name>
        <dbReference type="ChEBI" id="CHEBI:57540"/>
    </ligand>
</feature>
<feature type="binding site" evidence="1">
    <location>
        <position position="166"/>
    </location>
    <ligand>
        <name>substrate</name>
    </ligand>
</feature>
<evidence type="ECO:0000250" key="1"/>
<evidence type="ECO:0000255" key="2">
    <source>
        <dbReference type="PROSITE-ProRule" id="PRU10001"/>
    </source>
</evidence>
<evidence type="ECO:0000305" key="3"/>